<accession>P66872</accession>
<accession>Q99UM5</accession>
<feature type="chain" id="PRO_0000102864" description="Succinate--CoA ligase [ADP-forming] subunit beta">
    <location>
        <begin position="1"/>
        <end position="388"/>
    </location>
</feature>
<feature type="domain" description="ATP-grasp" evidence="1">
    <location>
        <begin position="9"/>
        <end position="244"/>
    </location>
</feature>
<feature type="binding site" evidence="1">
    <location>
        <position position="46"/>
    </location>
    <ligand>
        <name>ATP</name>
        <dbReference type="ChEBI" id="CHEBI:30616"/>
    </ligand>
</feature>
<feature type="binding site" evidence="1">
    <location>
        <begin position="53"/>
        <end position="55"/>
    </location>
    <ligand>
        <name>ATP</name>
        <dbReference type="ChEBI" id="CHEBI:30616"/>
    </ligand>
</feature>
<feature type="binding site" evidence="1">
    <location>
        <position position="99"/>
    </location>
    <ligand>
        <name>ATP</name>
        <dbReference type="ChEBI" id="CHEBI:30616"/>
    </ligand>
</feature>
<feature type="binding site" evidence="1">
    <location>
        <position position="102"/>
    </location>
    <ligand>
        <name>ATP</name>
        <dbReference type="ChEBI" id="CHEBI:30616"/>
    </ligand>
</feature>
<feature type="binding site" evidence="1">
    <location>
        <position position="107"/>
    </location>
    <ligand>
        <name>ATP</name>
        <dbReference type="ChEBI" id="CHEBI:30616"/>
    </ligand>
</feature>
<feature type="binding site" evidence="1">
    <location>
        <position position="199"/>
    </location>
    <ligand>
        <name>Mg(2+)</name>
        <dbReference type="ChEBI" id="CHEBI:18420"/>
    </ligand>
</feature>
<feature type="binding site" evidence="1">
    <location>
        <position position="213"/>
    </location>
    <ligand>
        <name>Mg(2+)</name>
        <dbReference type="ChEBI" id="CHEBI:18420"/>
    </ligand>
</feature>
<feature type="binding site" evidence="1">
    <location>
        <position position="264"/>
    </location>
    <ligand>
        <name>substrate</name>
        <note>ligand shared with subunit alpha</note>
    </ligand>
</feature>
<feature type="binding site" evidence="1">
    <location>
        <begin position="321"/>
        <end position="323"/>
    </location>
    <ligand>
        <name>substrate</name>
        <note>ligand shared with subunit alpha</note>
    </ligand>
</feature>
<gene>
    <name evidence="1" type="primary">sucC</name>
    <name type="ordered locus">MW1128</name>
</gene>
<protein>
    <recommendedName>
        <fullName evidence="1">Succinate--CoA ligase [ADP-forming] subunit beta</fullName>
        <ecNumber evidence="1">6.2.1.5</ecNumber>
    </recommendedName>
    <alternativeName>
        <fullName evidence="1">Succinyl-CoA synthetase subunit beta</fullName>
        <shortName evidence="1">SCS-beta</shortName>
    </alternativeName>
</protein>
<keyword id="KW-0067">ATP-binding</keyword>
<keyword id="KW-0436">Ligase</keyword>
<keyword id="KW-0460">Magnesium</keyword>
<keyword id="KW-0479">Metal-binding</keyword>
<keyword id="KW-0547">Nucleotide-binding</keyword>
<keyword id="KW-0816">Tricarboxylic acid cycle</keyword>
<name>SUCC_STAAW</name>
<organism>
    <name type="scientific">Staphylococcus aureus (strain MW2)</name>
    <dbReference type="NCBI Taxonomy" id="196620"/>
    <lineage>
        <taxon>Bacteria</taxon>
        <taxon>Bacillati</taxon>
        <taxon>Bacillota</taxon>
        <taxon>Bacilli</taxon>
        <taxon>Bacillales</taxon>
        <taxon>Staphylococcaceae</taxon>
        <taxon>Staphylococcus</taxon>
    </lineage>
</organism>
<proteinExistence type="inferred from homology"/>
<reference key="1">
    <citation type="journal article" date="2002" name="Lancet">
        <title>Genome and virulence determinants of high virulence community-acquired MRSA.</title>
        <authorList>
            <person name="Baba T."/>
            <person name="Takeuchi F."/>
            <person name="Kuroda M."/>
            <person name="Yuzawa H."/>
            <person name="Aoki K."/>
            <person name="Oguchi A."/>
            <person name="Nagai Y."/>
            <person name="Iwama N."/>
            <person name="Asano K."/>
            <person name="Naimi T."/>
            <person name="Kuroda H."/>
            <person name="Cui L."/>
            <person name="Yamamoto K."/>
            <person name="Hiramatsu K."/>
        </authorList>
    </citation>
    <scope>NUCLEOTIDE SEQUENCE [LARGE SCALE GENOMIC DNA]</scope>
    <source>
        <strain>MW2</strain>
    </source>
</reference>
<evidence type="ECO:0000255" key="1">
    <source>
        <dbReference type="HAMAP-Rule" id="MF_00558"/>
    </source>
</evidence>
<sequence>MNIHEYQGKEIFRSMGVAVPEGRVAFTAEEAVEKAKELNSDVYVVKAQIHAGGRGKAGGVKIAKSLSEVETYAKELLGKTLVTHQTGPEGKEIKRLYIEEGCAIQKEYYVGFVIDRATDQVTLMASEEGGTEIEEVAAKTPEKIFKETIDPVIGLSPFQARRIAFNINIPKESVNKAAKFLLALYNVFIEKDCSIVEINPLVTTADGDVLALDAKINFDDNALFRHKDVVELRDLEEEDPKEIEASKHDLSYIALDGDIGCMVNGAGLAMATMDTINHFGGNPANFLDAGGSATREKVTEAFKIILGDENVKGIFVNIFGGIMKCDVIAEGIVEAVKEVDLTLPLVVRLEGTNVELGKKILKDSGLAIEPAATMAEGAQKIVKLVKEA</sequence>
<dbReference type="EC" id="6.2.1.5" evidence="1"/>
<dbReference type="EMBL" id="BA000033">
    <property type="protein sequence ID" value="BAB94993.1"/>
    <property type="molecule type" value="Genomic_DNA"/>
</dbReference>
<dbReference type="RefSeq" id="WP_001020801.1">
    <property type="nucleotide sequence ID" value="NC_003923.1"/>
</dbReference>
<dbReference type="SMR" id="P66872"/>
<dbReference type="KEGG" id="sam:MW1128"/>
<dbReference type="HOGENOM" id="CLU_037430_0_2_9"/>
<dbReference type="UniPathway" id="UPA00223">
    <property type="reaction ID" value="UER00999"/>
</dbReference>
<dbReference type="GO" id="GO:0005829">
    <property type="term" value="C:cytosol"/>
    <property type="evidence" value="ECO:0007669"/>
    <property type="project" value="TreeGrafter"/>
</dbReference>
<dbReference type="GO" id="GO:0042709">
    <property type="term" value="C:succinate-CoA ligase complex"/>
    <property type="evidence" value="ECO:0007669"/>
    <property type="project" value="TreeGrafter"/>
</dbReference>
<dbReference type="GO" id="GO:0005524">
    <property type="term" value="F:ATP binding"/>
    <property type="evidence" value="ECO:0007669"/>
    <property type="project" value="UniProtKB-UniRule"/>
</dbReference>
<dbReference type="GO" id="GO:0000287">
    <property type="term" value="F:magnesium ion binding"/>
    <property type="evidence" value="ECO:0007669"/>
    <property type="project" value="UniProtKB-UniRule"/>
</dbReference>
<dbReference type="GO" id="GO:0004775">
    <property type="term" value="F:succinate-CoA ligase (ADP-forming) activity"/>
    <property type="evidence" value="ECO:0007669"/>
    <property type="project" value="UniProtKB-UniRule"/>
</dbReference>
<dbReference type="GO" id="GO:0004776">
    <property type="term" value="F:succinate-CoA ligase (GDP-forming) activity"/>
    <property type="evidence" value="ECO:0007669"/>
    <property type="project" value="RHEA"/>
</dbReference>
<dbReference type="GO" id="GO:0006104">
    <property type="term" value="P:succinyl-CoA metabolic process"/>
    <property type="evidence" value="ECO:0007669"/>
    <property type="project" value="TreeGrafter"/>
</dbReference>
<dbReference type="GO" id="GO:0006099">
    <property type="term" value="P:tricarboxylic acid cycle"/>
    <property type="evidence" value="ECO:0007669"/>
    <property type="project" value="UniProtKB-UniRule"/>
</dbReference>
<dbReference type="FunFam" id="3.30.1490.20:FF:000002">
    <property type="entry name" value="Succinate--CoA ligase [ADP-forming] subunit beta"/>
    <property type="match status" value="1"/>
</dbReference>
<dbReference type="FunFam" id="3.30.470.20:FF:000002">
    <property type="entry name" value="Succinate--CoA ligase [ADP-forming] subunit beta"/>
    <property type="match status" value="1"/>
</dbReference>
<dbReference type="FunFam" id="3.40.50.261:FF:000001">
    <property type="entry name" value="Succinate--CoA ligase [ADP-forming] subunit beta"/>
    <property type="match status" value="1"/>
</dbReference>
<dbReference type="Gene3D" id="3.30.1490.20">
    <property type="entry name" value="ATP-grasp fold, A domain"/>
    <property type="match status" value="1"/>
</dbReference>
<dbReference type="Gene3D" id="3.30.470.20">
    <property type="entry name" value="ATP-grasp fold, B domain"/>
    <property type="match status" value="1"/>
</dbReference>
<dbReference type="Gene3D" id="3.40.50.261">
    <property type="entry name" value="Succinyl-CoA synthetase domains"/>
    <property type="match status" value="1"/>
</dbReference>
<dbReference type="HAMAP" id="MF_00558">
    <property type="entry name" value="Succ_CoA_beta"/>
    <property type="match status" value="1"/>
</dbReference>
<dbReference type="InterPro" id="IPR011761">
    <property type="entry name" value="ATP-grasp"/>
</dbReference>
<dbReference type="InterPro" id="IPR013650">
    <property type="entry name" value="ATP-grasp_succ-CoA_synth-type"/>
</dbReference>
<dbReference type="InterPro" id="IPR013815">
    <property type="entry name" value="ATP_grasp_subdomain_1"/>
</dbReference>
<dbReference type="InterPro" id="IPR017866">
    <property type="entry name" value="Succ-CoA_synthase_bsu_CS"/>
</dbReference>
<dbReference type="InterPro" id="IPR005811">
    <property type="entry name" value="SUCC_ACL_C"/>
</dbReference>
<dbReference type="InterPro" id="IPR005809">
    <property type="entry name" value="Succ_CoA_ligase-like_bsu"/>
</dbReference>
<dbReference type="InterPro" id="IPR016102">
    <property type="entry name" value="Succinyl-CoA_synth-like"/>
</dbReference>
<dbReference type="NCBIfam" id="NF001913">
    <property type="entry name" value="PRK00696.1"/>
    <property type="match status" value="1"/>
</dbReference>
<dbReference type="NCBIfam" id="TIGR01016">
    <property type="entry name" value="sucCoAbeta"/>
    <property type="match status" value="1"/>
</dbReference>
<dbReference type="PANTHER" id="PTHR11815:SF10">
    <property type="entry name" value="SUCCINATE--COA LIGASE [GDP-FORMING] SUBUNIT BETA, MITOCHONDRIAL"/>
    <property type="match status" value="1"/>
</dbReference>
<dbReference type="PANTHER" id="PTHR11815">
    <property type="entry name" value="SUCCINYL-COA SYNTHETASE BETA CHAIN"/>
    <property type="match status" value="1"/>
</dbReference>
<dbReference type="Pfam" id="PF08442">
    <property type="entry name" value="ATP-grasp_2"/>
    <property type="match status" value="1"/>
</dbReference>
<dbReference type="Pfam" id="PF00549">
    <property type="entry name" value="Ligase_CoA"/>
    <property type="match status" value="1"/>
</dbReference>
<dbReference type="PIRSF" id="PIRSF001554">
    <property type="entry name" value="SucCS_beta"/>
    <property type="match status" value="1"/>
</dbReference>
<dbReference type="SUPFAM" id="SSF56059">
    <property type="entry name" value="Glutathione synthetase ATP-binding domain-like"/>
    <property type="match status" value="1"/>
</dbReference>
<dbReference type="SUPFAM" id="SSF52210">
    <property type="entry name" value="Succinyl-CoA synthetase domains"/>
    <property type="match status" value="1"/>
</dbReference>
<dbReference type="PROSITE" id="PS50975">
    <property type="entry name" value="ATP_GRASP"/>
    <property type="match status" value="1"/>
</dbReference>
<dbReference type="PROSITE" id="PS01217">
    <property type="entry name" value="SUCCINYL_COA_LIG_3"/>
    <property type="match status" value="1"/>
</dbReference>
<comment type="function">
    <text evidence="1">Succinyl-CoA synthetase functions in the citric acid cycle (TCA), coupling the hydrolysis of succinyl-CoA to the synthesis of either ATP or GTP and thus represents the only step of substrate-level phosphorylation in the TCA. The beta subunit provides nucleotide specificity of the enzyme and binds the substrate succinate, while the binding sites for coenzyme A and phosphate are found in the alpha subunit.</text>
</comment>
<comment type="catalytic activity">
    <reaction evidence="1">
        <text>succinate + ATP + CoA = succinyl-CoA + ADP + phosphate</text>
        <dbReference type="Rhea" id="RHEA:17661"/>
        <dbReference type="ChEBI" id="CHEBI:30031"/>
        <dbReference type="ChEBI" id="CHEBI:30616"/>
        <dbReference type="ChEBI" id="CHEBI:43474"/>
        <dbReference type="ChEBI" id="CHEBI:57287"/>
        <dbReference type="ChEBI" id="CHEBI:57292"/>
        <dbReference type="ChEBI" id="CHEBI:456216"/>
        <dbReference type="EC" id="6.2.1.5"/>
    </reaction>
    <physiologicalReaction direction="right-to-left" evidence="1">
        <dbReference type="Rhea" id="RHEA:17663"/>
    </physiologicalReaction>
</comment>
<comment type="catalytic activity">
    <reaction evidence="1">
        <text>GTP + succinate + CoA = succinyl-CoA + GDP + phosphate</text>
        <dbReference type="Rhea" id="RHEA:22120"/>
        <dbReference type="ChEBI" id="CHEBI:30031"/>
        <dbReference type="ChEBI" id="CHEBI:37565"/>
        <dbReference type="ChEBI" id="CHEBI:43474"/>
        <dbReference type="ChEBI" id="CHEBI:57287"/>
        <dbReference type="ChEBI" id="CHEBI:57292"/>
        <dbReference type="ChEBI" id="CHEBI:58189"/>
    </reaction>
    <physiologicalReaction direction="right-to-left" evidence="1">
        <dbReference type="Rhea" id="RHEA:22122"/>
    </physiologicalReaction>
</comment>
<comment type="cofactor">
    <cofactor evidence="1">
        <name>Mg(2+)</name>
        <dbReference type="ChEBI" id="CHEBI:18420"/>
    </cofactor>
    <text evidence="1">Binds 1 Mg(2+) ion per subunit.</text>
</comment>
<comment type="pathway">
    <text evidence="1">Carbohydrate metabolism; tricarboxylic acid cycle; succinate from succinyl-CoA (ligase route): step 1/1.</text>
</comment>
<comment type="subunit">
    <text evidence="1">Heterotetramer of two alpha and two beta subunits.</text>
</comment>
<comment type="similarity">
    <text evidence="1">Belongs to the succinate/malate CoA ligase beta subunit family.</text>
</comment>